<protein>
    <recommendedName>
        <fullName evidence="1">Ribosome-binding factor A</fullName>
    </recommendedName>
</protein>
<organism>
    <name type="scientific">Saccharophagus degradans (strain 2-40 / ATCC 43961 / DSM 17024)</name>
    <dbReference type="NCBI Taxonomy" id="203122"/>
    <lineage>
        <taxon>Bacteria</taxon>
        <taxon>Pseudomonadati</taxon>
        <taxon>Pseudomonadota</taxon>
        <taxon>Gammaproteobacteria</taxon>
        <taxon>Cellvibrionales</taxon>
        <taxon>Cellvibrionaceae</taxon>
        <taxon>Saccharophagus</taxon>
    </lineage>
</organism>
<feature type="chain" id="PRO_1000000196" description="Ribosome-binding factor A">
    <location>
        <begin position="1"/>
        <end position="128"/>
    </location>
</feature>
<dbReference type="EMBL" id="CP000282">
    <property type="protein sequence ID" value="ABD81967.1"/>
    <property type="molecule type" value="Genomic_DNA"/>
</dbReference>
<dbReference type="RefSeq" id="WP_011469184.1">
    <property type="nucleotide sequence ID" value="NC_007912.1"/>
</dbReference>
<dbReference type="SMR" id="Q21H62"/>
<dbReference type="STRING" id="203122.Sde_2707"/>
<dbReference type="GeneID" id="98614364"/>
<dbReference type="KEGG" id="sde:Sde_2707"/>
<dbReference type="eggNOG" id="COG0858">
    <property type="taxonomic scope" value="Bacteria"/>
</dbReference>
<dbReference type="HOGENOM" id="CLU_089475_5_0_6"/>
<dbReference type="OrthoDB" id="307788at2"/>
<dbReference type="Proteomes" id="UP000001947">
    <property type="component" value="Chromosome"/>
</dbReference>
<dbReference type="GO" id="GO:0005829">
    <property type="term" value="C:cytosol"/>
    <property type="evidence" value="ECO:0007669"/>
    <property type="project" value="TreeGrafter"/>
</dbReference>
<dbReference type="GO" id="GO:0043024">
    <property type="term" value="F:ribosomal small subunit binding"/>
    <property type="evidence" value="ECO:0007669"/>
    <property type="project" value="TreeGrafter"/>
</dbReference>
<dbReference type="GO" id="GO:0030490">
    <property type="term" value="P:maturation of SSU-rRNA"/>
    <property type="evidence" value="ECO:0007669"/>
    <property type="project" value="UniProtKB-UniRule"/>
</dbReference>
<dbReference type="Gene3D" id="3.30.300.20">
    <property type="match status" value="1"/>
</dbReference>
<dbReference type="HAMAP" id="MF_00003">
    <property type="entry name" value="RbfA"/>
    <property type="match status" value="1"/>
</dbReference>
<dbReference type="InterPro" id="IPR015946">
    <property type="entry name" value="KH_dom-like_a/b"/>
</dbReference>
<dbReference type="InterPro" id="IPR000238">
    <property type="entry name" value="RbfA"/>
</dbReference>
<dbReference type="InterPro" id="IPR023799">
    <property type="entry name" value="RbfA_dom_sf"/>
</dbReference>
<dbReference type="InterPro" id="IPR020053">
    <property type="entry name" value="Ribosome-bd_factorA_CS"/>
</dbReference>
<dbReference type="NCBIfam" id="TIGR00082">
    <property type="entry name" value="rbfA"/>
    <property type="match status" value="1"/>
</dbReference>
<dbReference type="PANTHER" id="PTHR33515">
    <property type="entry name" value="RIBOSOME-BINDING FACTOR A, CHLOROPLASTIC-RELATED"/>
    <property type="match status" value="1"/>
</dbReference>
<dbReference type="PANTHER" id="PTHR33515:SF1">
    <property type="entry name" value="RIBOSOME-BINDING FACTOR A, CHLOROPLASTIC-RELATED"/>
    <property type="match status" value="1"/>
</dbReference>
<dbReference type="Pfam" id="PF02033">
    <property type="entry name" value="RBFA"/>
    <property type="match status" value="1"/>
</dbReference>
<dbReference type="SUPFAM" id="SSF89919">
    <property type="entry name" value="Ribosome-binding factor A, RbfA"/>
    <property type="match status" value="1"/>
</dbReference>
<dbReference type="PROSITE" id="PS01319">
    <property type="entry name" value="RBFA"/>
    <property type="match status" value="1"/>
</dbReference>
<evidence type="ECO:0000255" key="1">
    <source>
        <dbReference type="HAMAP-Rule" id="MF_00003"/>
    </source>
</evidence>
<keyword id="KW-0963">Cytoplasm</keyword>
<keyword id="KW-1185">Reference proteome</keyword>
<keyword id="KW-0690">Ribosome biogenesis</keyword>
<reference key="1">
    <citation type="journal article" date="2008" name="PLoS Genet.">
        <title>Complete genome sequence of the complex carbohydrate-degrading marine bacterium, Saccharophagus degradans strain 2-40 T.</title>
        <authorList>
            <person name="Weiner R.M."/>
            <person name="Taylor L.E. II"/>
            <person name="Henrissat B."/>
            <person name="Hauser L."/>
            <person name="Land M."/>
            <person name="Coutinho P.M."/>
            <person name="Rancurel C."/>
            <person name="Saunders E.H."/>
            <person name="Longmire A.G."/>
            <person name="Zhang H."/>
            <person name="Bayer E.A."/>
            <person name="Gilbert H.J."/>
            <person name="Larimer F."/>
            <person name="Zhulin I.B."/>
            <person name="Ekborg N.A."/>
            <person name="Lamed R."/>
            <person name="Richardson P.M."/>
            <person name="Borovok I."/>
            <person name="Hutcheson S."/>
        </authorList>
    </citation>
    <scope>NUCLEOTIDE SEQUENCE [LARGE SCALE GENOMIC DNA]</scope>
    <source>
        <strain>2-40 / ATCC 43961 / DSM 17024</strain>
    </source>
</reference>
<proteinExistence type="inferred from homology"/>
<accession>Q21H62</accession>
<name>RBFA_SACD2</name>
<sequence length="128" mass="14309">MPREFFRSDRIADAIQRSLARVIQTEVRDPRLGLVNINSVDVTRDLSIAKVYVTVVGAKEESESEVAVKVLNKAAGFLRNVIAKELTMRSAPRLSFFYDRTAVQGQNLSNLIDRAVAADKQRSEDEGE</sequence>
<gene>
    <name evidence="1" type="primary">rbfA</name>
    <name type="ordered locus">Sde_2707</name>
</gene>
<comment type="function">
    <text evidence="1">One of several proteins that assist in the late maturation steps of the functional core of the 30S ribosomal subunit. Associates with free 30S ribosomal subunits (but not with 30S subunits that are part of 70S ribosomes or polysomes). Required for efficient processing of 16S rRNA. May interact with the 5'-terminal helix region of 16S rRNA.</text>
</comment>
<comment type="subunit">
    <text evidence="1">Monomer. Binds 30S ribosomal subunits, but not 50S ribosomal subunits or 70S ribosomes.</text>
</comment>
<comment type="subcellular location">
    <subcellularLocation>
        <location evidence="1">Cytoplasm</location>
    </subcellularLocation>
</comment>
<comment type="similarity">
    <text evidence="1">Belongs to the RbfA family.</text>
</comment>